<protein>
    <recommendedName>
        <fullName>Mediator of RNA polymerase II transcription subunit 10</fullName>
    </recommendedName>
    <alternativeName>
        <fullName>Mediator complex subunit 10</fullName>
    </alternativeName>
</protein>
<accession>Q6FQ75</accession>
<organism>
    <name type="scientific">Candida glabrata (strain ATCC 2001 / BCRC 20586 / JCM 3761 / NBRC 0622 / NRRL Y-65 / CBS 138)</name>
    <name type="common">Yeast</name>
    <name type="synonym">Nakaseomyces glabratus</name>
    <dbReference type="NCBI Taxonomy" id="284593"/>
    <lineage>
        <taxon>Eukaryota</taxon>
        <taxon>Fungi</taxon>
        <taxon>Dikarya</taxon>
        <taxon>Ascomycota</taxon>
        <taxon>Saccharomycotina</taxon>
        <taxon>Saccharomycetes</taxon>
        <taxon>Saccharomycetales</taxon>
        <taxon>Saccharomycetaceae</taxon>
        <taxon>Nakaseomyces</taxon>
    </lineage>
</organism>
<name>MED10_CANGA</name>
<gene>
    <name type="primary">NUT2</name>
    <name type="synonym">MED10</name>
    <name type="ordered locus">CAGL0I08525g</name>
</gene>
<dbReference type="EMBL" id="CR380955">
    <property type="protein sequence ID" value="CAG60556.1"/>
    <property type="molecule type" value="Genomic_DNA"/>
</dbReference>
<dbReference type="RefSeq" id="XP_447619.1">
    <property type="nucleotide sequence ID" value="XM_447619.1"/>
</dbReference>
<dbReference type="SMR" id="Q6FQ75"/>
<dbReference type="FunCoup" id="Q6FQ75">
    <property type="interactions" value="630"/>
</dbReference>
<dbReference type="STRING" id="284593.Q6FQ75"/>
<dbReference type="EnsemblFungi" id="CAGL0I08525g-T">
    <property type="protein sequence ID" value="CAGL0I08525g-T-p1"/>
    <property type="gene ID" value="CAGL0I08525g"/>
</dbReference>
<dbReference type="KEGG" id="cgr:2888923"/>
<dbReference type="CGD" id="CAL0132398">
    <property type="gene designation" value="CAGL0I08525g"/>
</dbReference>
<dbReference type="VEuPathDB" id="FungiDB:CAGL0I08525g"/>
<dbReference type="eggNOG" id="KOG3046">
    <property type="taxonomic scope" value="Eukaryota"/>
</dbReference>
<dbReference type="HOGENOM" id="CLU_096169_1_0_1"/>
<dbReference type="InParanoid" id="Q6FQ75"/>
<dbReference type="OMA" id="QYQRAKM"/>
<dbReference type="Proteomes" id="UP000002428">
    <property type="component" value="Chromosome I"/>
</dbReference>
<dbReference type="GO" id="GO:0070847">
    <property type="term" value="C:core mediator complex"/>
    <property type="evidence" value="ECO:0007669"/>
    <property type="project" value="EnsemblFungi"/>
</dbReference>
<dbReference type="GO" id="GO:0016592">
    <property type="term" value="C:mediator complex"/>
    <property type="evidence" value="ECO:0007669"/>
    <property type="project" value="InterPro"/>
</dbReference>
<dbReference type="GO" id="GO:0003712">
    <property type="term" value="F:transcription coregulator activity"/>
    <property type="evidence" value="ECO:0007669"/>
    <property type="project" value="InterPro"/>
</dbReference>
<dbReference type="GO" id="GO:0000122">
    <property type="term" value="P:negative regulation of transcription by RNA polymerase II"/>
    <property type="evidence" value="ECO:0007669"/>
    <property type="project" value="EnsemblFungi"/>
</dbReference>
<dbReference type="GO" id="GO:0032968">
    <property type="term" value="P:positive regulation of transcription elongation by RNA polymerase II"/>
    <property type="evidence" value="ECO:0007669"/>
    <property type="project" value="EnsemblFungi"/>
</dbReference>
<dbReference type="GO" id="GO:0060261">
    <property type="term" value="P:positive regulation of transcription initiation by RNA polymerase II"/>
    <property type="evidence" value="ECO:0007669"/>
    <property type="project" value="EnsemblFungi"/>
</dbReference>
<dbReference type="GO" id="GO:0051123">
    <property type="term" value="P:RNA polymerase II preinitiation complex assembly"/>
    <property type="evidence" value="ECO:0007669"/>
    <property type="project" value="EnsemblFungi"/>
</dbReference>
<dbReference type="InterPro" id="IPR019145">
    <property type="entry name" value="Mediator_Med10"/>
</dbReference>
<dbReference type="PANTHER" id="PTHR13345">
    <property type="entry name" value="MEDIATOR OF RNA POLYMERASE II TRANSCRIPTION SUBUNIT 10"/>
    <property type="match status" value="1"/>
</dbReference>
<dbReference type="PANTHER" id="PTHR13345:SF13">
    <property type="entry name" value="MEDIATOR OF RNA POLYMERASE II TRANSCRIPTION SUBUNIT 10"/>
    <property type="match status" value="1"/>
</dbReference>
<dbReference type="Pfam" id="PF09748">
    <property type="entry name" value="Med10"/>
    <property type="match status" value="1"/>
</dbReference>
<feature type="chain" id="PRO_0000303167" description="Mediator of RNA polymerase II transcription subunit 10">
    <location>
        <begin position="1"/>
        <end position="199"/>
    </location>
</feature>
<sequence>MGSVKSSNPALEGLHEELGVMEEQIRSIIESFIELGVSVYDFPGTPEASQGMVTNLKRNVDRIFKLNQTSNDPQSALKDVNVPLEVVQYIEDGRNPDIYTREFVEAIRRSNQYQRAKMHGMGMLRDSLAEKIKEQFPELKDDVENIVQRTNMKPTGQARVNSGTTNMTTTAEQSNVVNATAGDVGTNANTTESVEQNGI</sequence>
<reference key="1">
    <citation type="journal article" date="2004" name="Nature">
        <title>Genome evolution in yeasts.</title>
        <authorList>
            <person name="Dujon B."/>
            <person name="Sherman D."/>
            <person name="Fischer G."/>
            <person name="Durrens P."/>
            <person name="Casaregola S."/>
            <person name="Lafontaine I."/>
            <person name="de Montigny J."/>
            <person name="Marck C."/>
            <person name="Neuveglise C."/>
            <person name="Talla E."/>
            <person name="Goffard N."/>
            <person name="Frangeul L."/>
            <person name="Aigle M."/>
            <person name="Anthouard V."/>
            <person name="Babour A."/>
            <person name="Barbe V."/>
            <person name="Barnay S."/>
            <person name="Blanchin S."/>
            <person name="Beckerich J.-M."/>
            <person name="Beyne E."/>
            <person name="Bleykasten C."/>
            <person name="Boisrame A."/>
            <person name="Boyer J."/>
            <person name="Cattolico L."/>
            <person name="Confanioleri F."/>
            <person name="de Daruvar A."/>
            <person name="Despons L."/>
            <person name="Fabre E."/>
            <person name="Fairhead C."/>
            <person name="Ferry-Dumazet H."/>
            <person name="Groppi A."/>
            <person name="Hantraye F."/>
            <person name="Hennequin C."/>
            <person name="Jauniaux N."/>
            <person name="Joyet P."/>
            <person name="Kachouri R."/>
            <person name="Kerrest A."/>
            <person name="Koszul R."/>
            <person name="Lemaire M."/>
            <person name="Lesur I."/>
            <person name="Ma L."/>
            <person name="Muller H."/>
            <person name="Nicaud J.-M."/>
            <person name="Nikolski M."/>
            <person name="Oztas S."/>
            <person name="Ozier-Kalogeropoulos O."/>
            <person name="Pellenz S."/>
            <person name="Potier S."/>
            <person name="Richard G.-F."/>
            <person name="Straub M.-L."/>
            <person name="Suleau A."/>
            <person name="Swennen D."/>
            <person name="Tekaia F."/>
            <person name="Wesolowski-Louvel M."/>
            <person name="Westhof E."/>
            <person name="Wirth B."/>
            <person name="Zeniou-Meyer M."/>
            <person name="Zivanovic Y."/>
            <person name="Bolotin-Fukuhara M."/>
            <person name="Thierry A."/>
            <person name="Bouchier C."/>
            <person name="Caudron B."/>
            <person name="Scarpelli C."/>
            <person name="Gaillardin C."/>
            <person name="Weissenbach J."/>
            <person name="Wincker P."/>
            <person name="Souciet J.-L."/>
        </authorList>
    </citation>
    <scope>NUCLEOTIDE SEQUENCE [LARGE SCALE GENOMIC DNA]</scope>
    <source>
        <strain>ATCC 2001 / BCRC 20586 / JCM 3761 / NBRC 0622 / NRRL Y-65 / CBS 138</strain>
    </source>
</reference>
<comment type="function">
    <text evidence="1">Component of the Mediator complex, a coactivator involved in the regulated transcription of nearly all RNA polymerase II-dependent genes. Mediator functions as a bridge to convey information from gene-specific regulatory proteins to the basal RNA polymerase II transcription machinery. Mediator is recruited to promoters by direct interactions with regulatory proteins and serves as a scaffold for the assembly of a functional preinitiation complex with RNA polymerase II and the general transcription factors (By similarity).</text>
</comment>
<comment type="subunit">
    <text evidence="1">Component of the Mediator complex.</text>
</comment>
<comment type="subcellular location">
    <subcellularLocation>
        <location evidence="1">Nucleus</location>
    </subcellularLocation>
</comment>
<comment type="similarity">
    <text evidence="2">Belongs to the Mediator complex subunit 10 family.</text>
</comment>
<keyword id="KW-0010">Activator</keyword>
<keyword id="KW-0539">Nucleus</keyword>
<keyword id="KW-1185">Reference proteome</keyword>
<keyword id="KW-0804">Transcription</keyword>
<keyword id="KW-0805">Transcription regulation</keyword>
<proteinExistence type="inferred from homology"/>
<evidence type="ECO:0000250" key="1"/>
<evidence type="ECO:0000305" key="2"/>